<comment type="subcellular location">
    <subcellularLocation>
        <location evidence="1">Cell membrane</location>
        <topology evidence="1">Multi-pass membrane protein</topology>
    </subcellularLocation>
</comment>
<comment type="similarity">
    <text evidence="1">Belongs to the AAE transporter (TC 2.A.81) family. YbjL subfamily.</text>
</comment>
<keyword id="KW-1003">Cell membrane</keyword>
<keyword id="KW-0472">Membrane</keyword>
<keyword id="KW-0677">Repeat</keyword>
<keyword id="KW-0812">Transmembrane</keyword>
<keyword id="KW-1133">Transmembrane helix</keyword>
<keyword id="KW-0813">Transport</keyword>
<protein>
    <recommendedName>
        <fullName evidence="1">Putative transport protein VCM66_1101</fullName>
    </recommendedName>
</protein>
<organism>
    <name type="scientific">Vibrio cholerae serotype O1 (strain M66-2)</name>
    <dbReference type="NCBI Taxonomy" id="579112"/>
    <lineage>
        <taxon>Bacteria</taxon>
        <taxon>Pseudomonadati</taxon>
        <taxon>Pseudomonadota</taxon>
        <taxon>Gammaproteobacteria</taxon>
        <taxon>Vibrionales</taxon>
        <taxon>Vibrionaceae</taxon>
        <taxon>Vibrio</taxon>
    </lineage>
</organism>
<accession>C3LLJ2</accession>
<feature type="chain" id="PRO_1000148997" description="Putative transport protein VCM66_1101">
    <location>
        <begin position="1"/>
        <end position="558"/>
    </location>
</feature>
<feature type="transmembrane region" description="Helical" evidence="1">
    <location>
        <begin position="5"/>
        <end position="25"/>
    </location>
</feature>
<feature type="transmembrane region" description="Helical" evidence="1">
    <location>
        <begin position="37"/>
        <end position="57"/>
    </location>
</feature>
<feature type="transmembrane region" description="Helical" evidence="1">
    <location>
        <begin position="66"/>
        <end position="86"/>
    </location>
</feature>
<feature type="transmembrane region" description="Helical" evidence="1">
    <location>
        <begin position="92"/>
        <end position="112"/>
    </location>
</feature>
<feature type="transmembrane region" description="Helical" evidence="1">
    <location>
        <begin position="164"/>
        <end position="184"/>
    </location>
</feature>
<feature type="transmembrane region" description="Helical" evidence="1">
    <location>
        <begin position="384"/>
        <end position="404"/>
    </location>
</feature>
<feature type="transmembrane region" description="Helical" evidence="1">
    <location>
        <begin position="407"/>
        <end position="427"/>
    </location>
</feature>
<feature type="transmembrane region" description="Helical" evidence="1">
    <location>
        <begin position="441"/>
        <end position="461"/>
    </location>
</feature>
<feature type="transmembrane region" description="Helical" evidence="1">
    <location>
        <begin position="476"/>
        <end position="496"/>
    </location>
</feature>
<feature type="transmembrane region" description="Helical" evidence="1">
    <location>
        <begin position="504"/>
        <end position="524"/>
    </location>
</feature>
<feature type="transmembrane region" description="Helical" evidence="1">
    <location>
        <begin position="537"/>
        <end position="557"/>
    </location>
</feature>
<feature type="domain" description="RCK C-terminal 1" evidence="1">
    <location>
        <begin position="203"/>
        <end position="290"/>
    </location>
</feature>
<feature type="domain" description="RCK C-terminal 2" evidence="1">
    <location>
        <begin position="291"/>
        <end position="374"/>
    </location>
</feature>
<proteinExistence type="inferred from homology"/>
<gene>
    <name type="ordered locus">VCM66_1101</name>
</gene>
<reference key="1">
    <citation type="journal article" date="2008" name="PLoS ONE">
        <title>A recalibrated molecular clock and independent origins for the cholera pandemic clones.</title>
        <authorList>
            <person name="Feng L."/>
            <person name="Reeves P.R."/>
            <person name="Lan R."/>
            <person name="Ren Y."/>
            <person name="Gao C."/>
            <person name="Zhou Z."/>
            <person name="Ren Y."/>
            <person name="Cheng J."/>
            <person name="Wang W."/>
            <person name="Wang J."/>
            <person name="Qian W."/>
            <person name="Li D."/>
            <person name="Wang L."/>
        </authorList>
    </citation>
    <scope>NUCLEOTIDE SEQUENCE [LARGE SCALE GENOMIC DNA]</scope>
    <source>
        <strain>M66-2</strain>
    </source>
</reference>
<dbReference type="EMBL" id="CP001233">
    <property type="protein sequence ID" value="ACP05418.1"/>
    <property type="molecule type" value="Genomic_DNA"/>
</dbReference>
<dbReference type="RefSeq" id="WP_001018084.1">
    <property type="nucleotide sequence ID" value="NC_012578.1"/>
</dbReference>
<dbReference type="SMR" id="C3LLJ2"/>
<dbReference type="KEGG" id="vcm:VCM66_1101"/>
<dbReference type="HOGENOM" id="CLU_035023_2_2_6"/>
<dbReference type="Proteomes" id="UP000001217">
    <property type="component" value="Chromosome I"/>
</dbReference>
<dbReference type="GO" id="GO:0005886">
    <property type="term" value="C:plasma membrane"/>
    <property type="evidence" value="ECO:0007669"/>
    <property type="project" value="UniProtKB-SubCell"/>
</dbReference>
<dbReference type="GO" id="GO:0008324">
    <property type="term" value="F:monoatomic cation transmembrane transporter activity"/>
    <property type="evidence" value="ECO:0007669"/>
    <property type="project" value="InterPro"/>
</dbReference>
<dbReference type="GO" id="GO:0006813">
    <property type="term" value="P:potassium ion transport"/>
    <property type="evidence" value="ECO:0007669"/>
    <property type="project" value="InterPro"/>
</dbReference>
<dbReference type="Gene3D" id="3.30.70.1450">
    <property type="entry name" value="Regulator of K+ conductance, C-terminal domain"/>
    <property type="match status" value="2"/>
</dbReference>
<dbReference type="HAMAP" id="MF_01015">
    <property type="entry name" value="YbjL"/>
    <property type="match status" value="1"/>
</dbReference>
<dbReference type="InterPro" id="IPR050144">
    <property type="entry name" value="AAE_transporter"/>
</dbReference>
<dbReference type="InterPro" id="IPR006037">
    <property type="entry name" value="RCK_C"/>
</dbReference>
<dbReference type="InterPro" id="IPR036721">
    <property type="entry name" value="RCK_C_sf"/>
</dbReference>
<dbReference type="InterPro" id="IPR023017">
    <property type="entry name" value="Transp_YbjL_put"/>
</dbReference>
<dbReference type="InterPro" id="IPR006512">
    <property type="entry name" value="YidE_YbjL"/>
</dbReference>
<dbReference type="NCBIfam" id="NF003440">
    <property type="entry name" value="PRK04972.1"/>
    <property type="match status" value="1"/>
</dbReference>
<dbReference type="NCBIfam" id="TIGR01625">
    <property type="entry name" value="YidE_YbjL_dupl"/>
    <property type="match status" value="2"/>
</dbReference>
<dbReference type="PANTHER" id="PTHR30445">
    <property type="entry name" value="K(+)_H(+) ANTIPORTER SUBUNIT KHTT"/>
    <property type="match status" value="1"/>
</dbReference>
<dbReference type="PANTHER" id="PTHR30445:SF10">
    <property type="entry name" value="TRANSPORT PROTEIN YBJL-RELATED"/>
    <property type="match status" value="1"/>
</dbReference>
<dbReference type="Pfam" id="PF06826">
    <property type="entry name" value="Asp-Al_Ex"/>
    <property type="match status" value="2"/>
</dbReference>
<dbReference type="Pfam" id="PF02080">
    <property type="entry name" value="TrkA_C"/>
    <property type="match status" value="2"/>
</dbReference>
<dbReference type="SUPFAM" id="SSF116726">
    <property type="entry name" value="TrkA C-terminal domain-like"/>
    <property type="match status" value="2"/>
</dbReference>
<dbReference type="PROSITE" id="PS51202">
    <property type="entry name" value="RCK_C"/>
    <property type="match status" value="2"/>
</dbReference>
<sequence>MNIDVVLLLEQNPILLIFVVLAIGLSFGKIRFGSFQLGNSIGVLITSLIMGHLGFSFTPEALTIGFMLFIYCVGIEAGPNFFGIFFRDGKHYLILSLVVLITATWIAYFGGYYLNLDYGLAAGMMAGALTSTPVLVGAQDALNSGLAAVPRHMDLSLILDNVSVGYAMAYLIGLISMIMFAKLLPKLQKQNLSDSAQQIAQERGLGSQRKVYLPIIRAYRVGPELINWIDGRNLRELGIYRQTGCYIERIRRHGILAHPDGDAILQEGDEIALVGFPDSHARLDPSFRNGKEVFDRNLLDLRISEEEIVVKSDSIAGKRLSDLNLSEYGCFLNRVVRAQIEMPMDLDIVLAKGDVLQVSGEKSKVKGLADKIGFISVHSQMADLLAFCSFFILGILFGLVTMTFGQVSFSLGNAVGLLLSGITLGFLRANHPTFGYVPQGALNMVKDLGLAIFMVGIGLNAGSKMFQHLSEVGVQVIGLAFLVSVVPVVFAYLVGAYILKMNRALLFGAIIGARTCAPAMDVVNEYAKSTIPALGYAGTYAIANILMTLTGTIFILLS</sequence>
<evidence type="ECO:0000255" key="1">
    <source>
        <dbReference type="HAMAP-Rule" id="MF_01015"/>
    </source>
</evidence>
<name>Y1101_VIBCM</name>